<comment type="function">
    <text evidence="1">Binds as a heterodimer with protein bS6 to the central domain of the 16S rRNA, where it helps stabilize the platform of the 30S subunit.</text>
</comment>
<comment type="subunit">
    <text evidence="1">Part of the 30S ribosomal subunit. Forms a tight heterodimer with protein bS6.</text>
</comment>
<comment type="similarity">
    <text evidence="1">Belongs to the bacterial ribosomal protein bS18 family.</text>
</comment>
<feature type="chain" id="PRO_1000003653" description="Small ribosomal subunit protein bS18">
    <location>
        <begin position="1"/>
        <end position="93"/>
    </location>
</feature>
<organism>
    <name type="scientific">Verminephrobacter eiseniae (strain EF01-2)</name>
    <dbReference type="NCBI Taxonomy" id="391735"/>
    <lineage>
        <taxon>Bacteria</taxon>
        <taxon>Pseudomonadati</taxon>
        <taxon>Pseudomonadota</taxon>
        <taxon>Betaproteobacteria</taxon>
        <taxon>Burkholderiales</taxon>
        <taxon>Comamonadaceae</taxon>
        <taxon>Verminephrobacter</taxon>
    </lineage>
</organism>
<accession>A1WGK3</accession>
<evidence type="ECO:0000255" key="1">
    <source>
        <dbReference type="HAMAP-Rule" id="MF_00270"/>
    </source>
</evidence>
<evidence type="ECO:0000305" key="2"/>
<sequence>MATFKKFNKDKRPKRNTQSLLFKRKRFCRFTVTGVEEIDYKDVDTLRDFIAENGKIIPARLTGTRAIFQRQLNTAIKRARFLALVPYSDQHKI</sequence>
<keyword id="KW-1185">Reference proteome</keyword>
<keyword id="KW-0687">Ribonucleoprotein</keyword>
<keyword id="KW-0689">Ribosomal protein</keyword>
<keyword id="KW-0694">RNA-binding</keyword>
<keyword id="KW-0699">rRNA-binding</keyword>
<gene>
    <name evidence="1" type="primary">rpsR</name>
    <name type="ordered locus">Veis_0983</name>
</gene>
<dbReference type="EMBL" id="CP000542">
    <property type="protein sequence ID" value="ABM56760.1"/>
    <property type="molecule type" value="Genomic_DNA"/>
</dbReference>
<dbReference type="RefSeq" id="WP_005795932.1">
    <property type="nucleotide sequence ID" value="NC_008786.1"/>
</dbReference>
<dbReference type="SMR" id="A1WGK3"/>
<dbReference type="STRING" id="391735.Veis_0983"/>
<dbReference type="GeneID" id="77322307"/>
<dbReference type="KEGG" id="vei:Veis_0983"/>
<dbReference type="eggNOG" id="COG0238">
    <property type="taxonomic scope" value="Bacteria"/>
</dbReference>
<dbReference type="HOGENOM" id="CLU_148710_0_3_4"/>
<dbReference type="OrthoDB" id="9812008at2"/>
<dbReference type="Proteomes" id="UP000000374">
    <property type="component" value="Chromosome"/>
</dbReference>
<dbReference type="GO" id="GO:0022627">
    <property type="term" value="C:cytosolic small ribosomal subunit"/>
    <property type="evidence" value="ECO:0007669"/>
    <property type="project" value="TreeGrafter"/>
</dbReference>
<dbReference type="GO" id="GO:0070181">
    <property type="term" value="F:small ribosomal subunit rRNA binding"/>
    <property type="evidence" value="ECO:0007669"/>
    <property type="project" value="TreeGrafter"/>
</dbReference>
<dbReference type="GO" id="GO:0003735">
    <property type="term" value="F:structural constituent of ribosome"/>
    <property type="evidence" value="ECO:0007669"/>
    <property type="project" value="InterPro"/>
</dbReference>
<dbReference type="GO" id="GO:0006412">
    <property type="term" value="P:translation"/>
    <property type="evidence" value="ECO:0007669"/>
    <property type="project" value="UniProtKB-UniRule"/>
</dbReference>
<dbReference type="Gene3D" id="4.10.640.10">
    <property type="entry name" value="Ribosomal protein S18"/>
    <property type="match status" value="1"/>
</dbReference>
<dbReference type="HAMAP" id="MF_00270">
    <property type="entry name" value="Ribosomal_bS18"/>
    <property type="match status" value="1"/>
</dbReference>
<dbReference type="InterPro" id="IPR001648">
    <property type="entry name" value="Ribosomal_bS18"/>
</dbReference>
<dbReference type="InterPro" id="IPR036870">
    <property type="entry name" value="Ribosomal_bS18_sf"/>
</dbReference>
<dbReference type="NCBIfam" id="TIGR00165">
    <property type="entry name" value="S18"/>
    <property type="match status" value="1"/>
</dbReference>
<dbReference type="PANTHER" id="PTHR13479">
    <property type="entry name" value="30S RIBOSOMAL PROTEIN S18"/>
    <property type="match status" value="1"/>
</dbReference>
<dbReference type="PANTHER" id="PTHR13479:SF40">
    <property type="entry name" value="SMALL RIBOSOMAL SUBUNIT PROTEIN BS18M"/>
    <property type="match status" value="1"/>
</dbReference>
<dbReference type="Pfam" id="PF01084">
    <property type="entry name" value="Ribosomal_S18"/>
    <property type="match status" value="1"/>
</dbReference>
<dbReference type="PRINTS" id="PR00974">
    <property type="entry name" value="RIBOSOMALS18"/>
</dbReference>
<dbReference type="SUPFAM" id="SSF46911">
    <property type="entry name" value="Ribosomal protein S18"/>
    <property type="match status" value="1"/>
</dbReference>
<reference key="1">
    <citation type="submission" date="2006-12" db="EMBL/GenBank/DDBJ databases">
        <title>Complete sequence of chromosome 1 of Verminephrobacter eiseniae EF01-2.</title>
        <authorList>
            <person name="Copeland A."/>
            <person name="Lucas S."/>
            <person name="Lapidus A."/>
            <person name="Barry K."/>
            <person name="Detter J.C."/>
            <person name="Glavina del Rio T."/>
            <person name="Dalin E."/>
            <person name="Tice H."/>
            <person name="Pitluck S."/>
            <person name="Chertkov O."/>
            <person name="Brettin T."/>
            <person name="Bruce D."/>
            <person name="Han C."/>
            <person name="Tapia R."/>
            <person name="Gilna P."/>
            <person name="Schmutz J."/>
            <person name="Larimer F."/>
            <person name="Land M."/>
            <person name="Hauser L."/>
            <person name="Kyrpides N."/>
            <person name="Kim E."/>
            <person name="Stahl D."/>
            <person name="Richardson P."/>
        </authorList>
    </citation>
    <scope>NUCLEOTIDE SEQUENCE [LARGE SCALE GENOMIC DNA]</scope>
    <source>
        <strain>EF01-2</strain>
    </source>
</reference>
<name>RS18_VEREI</name>
<protein>
    <recommendedName>
        <fullName evidence="1">Small ribosomal subunit protein bS18</fullName>
    </recommendedName>
    <alternativeName>
        <fullName evidence="2">30S ribosomal protein S18</fullName>
    </alternativeName>
</protein>
<proteinExistence type="inferred from homology"/>